<comment type="function">
    <text evidence="1">Essential for recycling GMP and indirectly, cGMP.</text>
</comment>
<comment type="catalytic activity">
    <reaction evidence="1">
        <text>GMP + ATP = GDP + ADP</text>
        <dbReference type="Rhea" id="RHEA:20780"/>
        <dbReference type="ChEBI" id="CHEBI:30616"/>
        <dbReference type="ChEBI" id="CHEBI:58115"/>
        <dbReference type="ChEBI" id="CHEBI:58189"/>
        <dbReference type="ChEBI" id="CHEBI:456216"/>
        <dbReference type="EC" id="2.7.4.8"/>
    </reaction>
</comment>
<comment type="subcellular location">
    <subcellularLocation>
        <location evidence="1">Cytoplasm</location>
    </subcellularLocation>
</comment>
<comment type="similarity">
    <text evidence="1">Belongs to the guanylate kinase family.</text>
</comment>
<dbReference type="EC" id="2.7.4.8" evidence="1"/>
<dbReference type="EMBL" id="CP000016">
    <property type="protein sequence ID" value="AAZ41239.1"/>
    <property type="molecule type" value="Genomic_DNA"/>
</dbReference>
<dbReference type="SMR" id="Q491W5"/>
<dbReference type="STRING" id="291272.BPEN_641"/>
<dbReference type="KEGG" id="bpn:BPEN_641"/>
<dbReference type="eggNOG" id="COG0194">
    <property type="taxonomic scope" value="Bacteria"/>
</dbReference>
<dbReference type="HOGENOM" id="CLU_001715_1_2_6"/>
<dbReference type="OrthoDB" id="9808150at2"/>
<dbReference type="Proteomes" id="UP000007794">
    <property type="component" value="Chromosome"/>
</dbReference>
<dbReference type="GO" id="GO:0005829">
    <property type="term" value="C:cytosol"/>
    <property type="evidence" value="ECO:0007669"/>
    <property type="project" value="TreeGrafter"/>
</dbReference>
<dbReference type="GO" id="GO:0005524">
    <property type="term" value="F:ATP binding"/>
    <property type="evidence" value="ECO:0007669"/>
    <property type="project" value="UniProtKB-UniRule"/>
</dbReference>
<dbReference type="GO" id="GO:0004385">
    <property type="term" value="F:guanylate kinase activity"/>
    <property type="evidence" value="ECO:0007669"/>
    <property type="project" value="UniProtKB-UniRule"/>
</dbReference>
<dbReference type="CDD" id="cd00071">
    <property type="entry name" value="GMPK"/>
    <property type="match status" value="1"/>
</dbReference>
<dbReference type="FunFam" id="3.30.63.10:FF:000005">
    <property type="entry name" value="Guanylate kinase"/>
    <property type="match status" value="1"/>
</dbReference>
<dbReference type="Gene3D" id="3.30.63.10">
    <property type="entry name" value="Guanylate Kinase phosphate binding domain"/>
    <property type="match status" value="1"/>
</dbReference>
<dbReference type="Gene3D" id="3.40.50.300">
    <property type="entry name" value="P-loop containing nucleotide triphosphate hydrolases"/>
    <property type="match status" value="1"/>
</dbReference>
<dbReference type="HAMAP" id="MF_00328">
    <property type="entry name" value="Guanylate_kinase"/>
    <property type="match status" value="1"/>
</dbReference>
<dbReference type="InterPro" id="IPR008145">
    <property type="entry name" value="GK/Ca_channel_bsu"/>
</dbReference>
<dbReference type="InterPro" id="IPR008144">
    <property type="entry name" value="Guanylate_kin-like_dom"/>
</dbReference>
<dbReference type="InterPro" id="IPR017665">
    <property type="entry name" value="Guanylate_kinase"/>
</dbReference>
<dbReference type="InterPro" id="IPR020590">
    <property type="entry name" value="Guanylate_kinase_CS"/>
</dbReference>
<dbReference type="InterPro" id="IPR027417">
    <property type="entry name" value="P-loop_NTPase"/>
</dbReference>
<dbReference type="NCBIfam" id="TIGR03263">
    <property type="entry name" value="guanyl_kin"/>
    <property type="match status" value="1"/>
</dbReference>
<dbReference type="PANTHER" id="PTHR23117:SF13">
    <property type="entry name" value="GUANYLATE KINASE"/>
    <property type="match status" value="1"/>
</dbReference>
<dbReference type="PANTHER" id="PTHR23117">
    <property type="entry name" value="GUANYLATE KINASE-RELATED"/>
    <property type="match status" value="1"/>
</dbReference>
<dbReference type="Pfam" id="PF00625">
    <property type="entry name" value="Guanylate_kin"/>
    <property type="match status" value="1"/>
</dbReference>
<dbReference type="SMART" id="SM00072">
    <property type="entry name" value="GuKc"/>
    <property type="match status" value="1"/>
</dbReference>
<dbReference type="SUPFAM" id="SSF52540">
    <property type="entry name" value="P-loop containing nucleoside triphosphate hydrolases"/>
    <property type="match status" value="1"/>
</dbReference>
<dbReference type="PROSITE" id="PS00856">
    <property type="entry name" value="GUANYLATE_KINASE_1"/>
    <property type="match status" value="1"/>
</dbReference>
<dbReference type="PROSITE" id="PS50052">
    <property type="entry name" value="GUANYLATE_KINASE_2"/>
    <property type="match status" value="1"/>
</dbReference>
<sequence>MKNSGILCIISAPSGTGKSTLIHTVIQCDCFVYQTKLSISYTTRIKRPGEIHGKDYYFISKKKFKYMIDKNMFFEYAMIFNHYYGTAKTDIETMLNTGIHIVLNIDWKGAQQIRSKISKNIYTIFILPPSKKELARRLYLRGEDTEKVIVARMGQAMDEISHFKEYDYIIINDNFNIALMHLQSIMLSEQLRIAHQKIRYATLINHLLLPDI</sequence>
<feature type="chain" id="PRO_0000266291" description="Guanylate kinase">
    <location>
        <begin position="1"/>
        <end position="212"/>
    </location>
</feature>
<feature type="domain" description="Guanylate kinase-like" evidence="1">
    <location>
        <begin position="5"/>
        <end position="187"/>
    </location>
</feature>
<feature type="binding site" evidence="1">
    <location>
        <begin position="12"/>
        <end position="19"/>
    </location>
    <ligand>
        <name>ATP</name>
        <dbReference type="ChEBI" id="CHEBI:30616"/>
    </ligand>
</feature>
<gene>
    <name evidence="1" type="primary">gmk</name>
    <name type="ordered locus">BPEN_641</name>
</gene>
<keyword id="KW-0067">ATP-binding</keyword>
<keyword id="KW-0963">Cytoplasm</keyword>
<keyword id="KW-0418">Kinase</keyword>
<keyword id="KW-0547">Nucleotide-binding</keyword>
<keyword id="KW-1185">Reference proteome</keyword>
<keyword id="KW-0808">Transferase</keyword>
<proteinExistence type="inferred from homology"/>
<reference key="1">
    <citation type="journal article" date="2005" name="Genome Res.">
        <title>Genome sequence of Blochmannia pennsylvanicus indicates parallel evolutionary trends among bacterial mutualists of insects.</title>
        <authorList>
            <person name="Degnan P.H."/>
            <person name="Lazarus A.B."/>
            <person name="Wernegreen J.J."/>
        </authorList>
    </citation>
    <scope>NUCLEOTIDE SEQUENCE [LARGE SCALE GENOMIC DNA]</scope>
    <source>
        <strain>BPEN</strain>
    </source>
</reference>
<accession>Q491W5</accession>
<name>KGUA_BLOPB</name>
<protein>
    <recommendedName>
        <fullName evidence="1">Guanylate kinase</fullName>
        <ecNumber evidence="1">2.7.4.8</ecNumber>
    </recommendedName>
    <alternativeName>
        <fullName evidence="1">GMP kinase</fullName>
    </alternativeName>
</protein>
<organism>
    <name type="scientific">Blochmanniella pennsylvanica (strain BPEN)</name>
    <dbReference type="NCBI Taxonomy" id="291272"/>
    <lineage>
        <taxon>Bacteria</taxon>
        <taxon>Pseudomonadati</taxon>
        <taxon>Pseudomonadota</taxon>
        <taxon>Gammaproteobacteria</taxon>
        <taxon>Enterobacterales</taxon>
        <taxon>Enterobacteriaceae</taxon>
        <taxon>ant endosymbionts</taxon>
        <taxon>Candidatus Blochmanniella</taxon>
    </lineage>
</organism>
<evidence type="ECO:0000255" key="1">
    <source>
        <dbReference type="HAMAP-Rule" id="MF_00328"/>
    </source>
</evidence>